<comment type="similarity">
    <text evidence="1">Belongs to the bacterial ribosomal protein bS16 family.</text>
</comment>
<sequence>MAVKIRLTRMGSKKKPFYRINVADSRAPRDGRFIETVGTYNPLVAENQITIKEDRVLEWLSKGAQPSDTVRNILSKAGVMAKFHDQKFSK</sequence>
<organism>
    <name type="scientific">Streptococcus pyogenes serotype M12 (strain MGAS9429)</name>
    <dbReference type="NCBI Taxonomy" id="370551"/>
    <lineage>
        <taxon>Bacteria</taxon>
        <taxon>Bacillati</taxon>
        <taxon>Bacillota</taxon>
        <taxon>Bacilli</taxon>
        <taxon>Lactobacillales</taxon>
        <taxon>Streptococcaceae</taxon>
        <taxon>Streptococcus</taxon>
    </lineage>
</organism>
<feature type="chain" id="PRO_1000049360" description="Small ribosomal subunit protein bS16">
    <location>
        <begin position="1"/>
        <end position="90"/>
    </location>
</feature>
<accession>Q1JMC0</accession>
<protein>
    <recommendedName>
        <fullName evidence="1">Small ribosomal subunit protein bS16</fullName>
    </recommendedName>
    <alternativeName>
        <fullName evidence="2">30S ribosomal protein S16</fullName>
    </alternativeName>
</protein>
<proteinExistence type="inferred from homology"/>
<gene>
    <name evidence="1" type="primary">rpsP</name>
    <name type="ordered locus">MGAS9429_Spy0704</name>
</gene>
<name>RS16_STRPC</name>
<evidence type="ECO:0000255" key="1">
    <source>
        <dbReference type="HAMAP-Rule" id="MF_00385"/>
    </source>
</evidence>
<evidence type="ECO:0000305" key="2"/>
<reference key="1">
    <citation type="journal article" date="2006" name="Proc. Natl. Acad. Sci. U.S.A.">
        <title>Molecular genetic anatomy of inter- and intraserotype variation in the human bacterial pathogen group A Streptococcus.</title>
        <authorList>
            <person name="Beres S.B."/>
            <person name="Richter E.W."/>
            <person name="Nagiec M.J."/>
            <person name="Sumby P."/>
            <person name="Porcella S.F."/>
            <person name="DeLeo F.R."/>
            <person name="Musser J.M."/>
        </authorList>
    </citation>
    <scope>NUCLEOTIDE SEQUENCE [LARGE SCALE GENOMIC DNA]</scope>
    <source>
        <strain>MGAS9429</strain>
    </source>
</reference>
<keyword id="KW-0687">Ribonucleoprotein</keyword>
<keyword id="KW-0689">Ribosomal protein</keyword>
<dbReference type="EMBL" id="CP000259">
    <property type="protein sequence ID" value="ABF31892.1"/>
    <property type="molecule type" value="Genomic_DNA"/>
</dbReference>
<dbReference type="RefSeq" id="WP_002985074.1">
    <property type="nucleotide sequence ID" value="NC_008021.1"/>
</dbReference>
<dbReference type="SMR" id="Q1JMC0"/>
<dbReference type="KEGG" id="spk:MGAS9429_Spy0704"/>
<dbReference type="HOGENOM" id="CLU_100590_5_0_9"/>
<dbReference type="Proteomes" id="UP000002433">
    <property type="component" value="Chromosome"/>
</dbReference>
<dbReference type="GO" id="GO:0005737">
    <property type="term" value="C:cytoplasm"/>
    <property type="evidence" value="ECO:0007669"/>
    <property type="project" value="UniProtKB-ARBA"/>
</dbReference>
<dbReference type="GO" id="GO:0015935">
    <property type="term" value="C:small ribosomal subunit"/>
    <property type="evidence" value="ECO:0007669"/>
    <property type="project" value="TreeGrafter"/>
</dbReference>
<dbReference type="GO" id="GO:0003735">
    <property type="term" value="F:structural constituent of ribosome"/>
    <property type="evidence" value="ECO:0007669"/>
    <property type="project" value="InterPro"/>
</dbReference>
<dbReference type="GO" id="GO:0006412">
    <property type="term" value="P:translation"/>
    <property type="evidence" value="ECO:0007669"/>
    <property type="project" value="UniProtKB-UniRule"/>
</dbReference>
<dbReference type="FunFam" id="3.30.1320.10:FF:000002">
    <property type="entry name" value="30S ribosomal protein S16"/>
    <property type="match status" value="1"/>
</dbReference>
<dbReference type="Gene3D" id="3.30.1320.10">
    <property type="match status" value="1"/>
</dbReference>
<dbReference type="HAMAP" id="MF_00385">
    <property type="entry name" value="Ribosomal_bS16"/>
    <property type="match status" value="1"/>
</dbReference>
<dbReference type="InterPro" id="IPR000307">
    <property type="entry name" value="Ribosomal_bS16"/>
</dbReference>
<dbReference type="InterPro" id="IPR023803">
    <property type="entry name" value="Ribosomal_bS16_dom_sf"/>
</dbReference>
<dbReference type="NCBIfam" id="TIGR00002">
    <property type="entry name" value="S16"/>
    <property type="match status" value="1"/>
</dbReference>
<dbReference type="PANTHER" id="PTHR12919">
    <property type="entry name" value="30S RIBOSOMAL PROTEIN S16"/>
    <property type="match status" value="1"/>
</dbReference>
<dbReference type="PANTHER" id="PTHR12919:SF20">
    <property type="entry name" value="SMALL RIBOSOMAL SUBUNIT PROTEIN BS16M"/>
    <property type="match status" value="1"/>
</dbReference>
<dbReference type="Pfam" id="PF00886">
    <property type="entry name" value="Ribosomal_S16"/>
    <property type="match status" value="1"/>
</dbReference>
<dbReference type="SUPFAM" id="SSF54565">
    <property type="entry name" value="Ribosomal protein S16"/>
    <property type="match status" value="1"/>
</dbReference>